<name>HIS7_SULNB</name>
<gene>
    <name evidence="1" type="primary">hisB</name>
    <name type="ordered locus">SUN_1227</name>
</gene>
<evidence type="ECO:0000255" key="1">
    <source>
        <dbReference type="HAMAP-Rule" id="MF_00076"/>
    </source>
</evidence>
<keyword id="KW-0028">Amino-acid biosynthesis</keyword>
<keyword id="KW-0963">Cytoplasm</keyword>
<keyword id="KW-0368">Histidine biosynthesis</keyword>
<keyword id="KW-0456">Lyase</keyword>
<comment type="catalytic activity">
    <reaction evidence="1">
        <text>D-erythro-1-(imidazol-4-yl)glycerol 3-phosphate = 3-(imidazol-4-yl)-2-oxopropyl phosphate + H2O</text>
        <dbReference type="Rhea" id="RHEA:11040"/>
        <dbReference type="ChEBI" id="CHEBI:15377"/>
        <dbReference type="ChEBI" id="CHEBI:57766"/>
        <dbReference type="ChEBI" id="CHEBI:58278"/>
        <dbReference type="EC" id="4.2.1.19"/>
    </reaction>
</comment>
<comment type="pathway">
    <text evidence="1">Amino-acid biosynthesis; L-histidine biosynthesis; L-histidine from 5-phospho-alpha-D-ribose 1-diphosphate: step 6/9.</text>
</comment>
<comment type="subcellular location">
    <subcellularLocation>
        <location evidence="1">Cytoplasm</location>
    </subcellularLocation>
</comment>
<comment type="similarity">
    <text evidence="1">Belongs to the imidazoleglycerol-phosphate dehydratase family.</text>
</comment>
<organism>
    <name type="scientific">Sulfurovum sp. (strain NBC37-1)</name>
    <dbReference type="NCBI Taxonomy" id="387093"/>
    <lineage>
        <taxon>Bacteria</taxon>
        <taxon>Pseudomonadati</taxon>
        <taxon>Campylobacterota</taxon>
        <taxon>Epsilonproteobacteria</taxon>
        <taxon>Campylobacterales</taxon>
        <taxon>Sulfurovaceae</taxon>
        <taxon>Sulfurovum</taxon>
    </lineage>
</organism>
<proteinExistence type="inferred from homology"/>
<protein>
    <recommendedName>
        <fullName evidence="1">Imidazoleglycerol-phosphate dehydratase</fullName>
        <shortName evidence="1">IGPD</shortName>
        <ecNumber evidence="1">4.2.1.19</ecNumber>
    </recommendedName>
</protein>
<accession>A6Q9M2</accession>
<feature type="chain" id="PRO_1000010362" description="Imidazoleglycerol-phosphate dehydratase">
    <location>
        <begin position="1"/>
        <end position="190"/>
    </location>
</feature>
<sequence length="190" mass="21038">MIEVTRETKETQISVKLNLYGKGQAKIDTGVGFFDHMLEAFTKHAHIDMEVTCTGDTHIDDHHTVEDVGIVIGQALREAIYPVKSIERFGNATVVMDEASVTCDIDLSNRGFLVFELPIGGKVGEFDVELVEEFFRAFAFNLPLTLHLIYNRGKNKHHIIEAAFKALAVSLRRAVAINENAGIPSTKGVL</sequence>
<reference key="1">
    <citation type="journal article" date="2007" name="Proc. Natl. Acad. Sci. U.S.A.">
        <title>Deep-sea vent epsilon-proteobacterial genomes provide insights into emergence of pathogens.</title>
        <authorList>
            <person name="Nakagawa S."/>
            <person name="Takaki Y."/>
            <person name="Shimamura S."/>
            <person name="Reysenbach A.-L."/>
            <person name="Takai K."/>
            <person name="Horikoshi K."/>
        </authorList>
    </citation>
    <scope>NUCLEOTIDE SEQUENCE [LARGE SCALE GENOMIC DNA]</scope>
    <source>
        <strain>NBC37-1</strain>
    </source>
</reference>
<dbReference type="EC" id="4.2.1.19" evidence="1"/>
<dbReference type="EMBL" id="AP009179">
    <property type="protein sequence ID" value="BAF72181.1"/>
    <property type="molecule type" value="Genomic_DNA"/>
</dbReference>
<dbReference type="RefSeq" id="WP_011980914.1">
    <property type="nucleotide sequence ID" value="NC_009663.1"/>
</dbReference>
<dbReference type="SMR" id="A6Q9M2"/>
<dbReference type="STRING" id="387093.SUN_1227"/>
<dbReference type="KEGG" id="sun:SUN_1227"/>
<dbReference type="eggNOG" id="COG0131">
    <property type="taxonomic scope" value="Bacteria"/>
</dbReference>
<dbReference type="HOGENOM" id="CLU_044308_3_0_7"/>
<dbReference type="OrthoDB" id="9790411at2"/>
<dbReference type="UniPathway" id="UPA00031">
    <property type="reaction ID" value="UER00011"/>
</dbReference>
<dbReference type="Proteomes" id="UP000006378">
    <property type="component" value="Chromosome"/>
</dbReference>
<dbReference type="GO" id="GO:0005737">
    <property type="term" value="C:cytoplasm"/>
    <property type="evidence" value="ECO:0007669"/>
    <property type="project" value="UniProtKB-SubCell"/>
</dbReference>
<dbReference type="GO" id="GO:0004424">
    <property type="term" value="F:imidazoleglycerol-phosphate dehydratase activity"/>
    <property type="evidence" value="ECO:0007669"/>
    <property type="project" value="UniProtKB-UniRule"/>
</dbReference>
<dbReference type="GO" id="GO:0000105">
    <property type="term" value="P:L-histidine biosynthetic process"/>
    <property type="evidence" value="ECO:0007669"/>
    <property type="project" value="UniProtKB-UniRule"/>
</dbReference>
<dbReference type="CDD" id="cd07914">
    <property type="entry name" value="IGPD"/>
    <property type="match status" value="1"/>
</dbReference>
<dbReference type="FunFam" id="3.30.230.40:FF:000001">
    <property type="entry name" value="Imidazoleglycerol-phosphate dehydratase HisB"/>
    <property type="match status" value="1"/>
</dbReference>
<dbReference type="FunFam" id="3.30.230.40:FF:000003">
    <property type="entry name" value="Imidazoleglycerol-phosphate dehydratase HisB"/>
    <property type="match status" value="1"/>
</dbReference>
<dbReference type="Gene3D" id="3.30.230.40">
    <property type="entry name" value="Imidazole glycerol phosphate dehydratase, domain 1"/>
    <property type="match status" value="2"/>
</dbReference>
<dbReference type="HAMAP" id="MF_00076">
    <property type="entry name" value="HisB"/>
    <property type="match status" value="1"/>
</dbReference>
<dbReference type="InterPro" id="IPR038494">
    <property type="entry name" value="IGPD_sf"/>
</dbReference>
<dbReference type="InterPro" id="IPR000807">
    <property type="entry name" value="ImidazoleglycerolP_deHydtase"/>
</dbReference>
<dbReference type="InterPro" id="IPR020565">
    <property type="entry name" value="ImidazoleglycerP_deHydtase_CS"/>
</dbReference>
<dbReference type="InterPro" id="IPR020568">
    <property type="entry name" value="Ribosomal_Su5_D2-typ_SF"/>
</dbReference>
<dbReference type="NCBIfam" id="NF002111">
    <property type="entry name" value="PRK00951.2-1"/>
    <property type="match status" value="1"/>
</dbReference>
<dbReference type="NCBIfam" id="NF002114">
    <property type="entry name" value="PRK00951.2-4"/>
    <property type="match status" value="1"/>
</dbReference>
<dbReference type="PANTHER" id="PTHR23133:SF2">
    <property type="entry name" value="IMIDAZOLEGLYCEROL-PHOSPHATE DEHYDRATASE"/>
    <property type="match status" value="1"/>
</dbReference>
<dbReference type="PANTHER" id="PTHR23133">
    <property type="entry name" value="IMIDAZOLEGLYCEROL-PHOSPHATE DEHYDRATASE HIS7"/>
    <property type="match status" value="1"/>
</dbReference>
<dbReference type="Pfam" id="PF00475">
    <property type="entry name" value="IGPD"/>
    <property type="match status" value="1"/>
</dbReference>
<dbReference type="SUPFAM" id="SSF54211">
    <property type="entry name" value="Ribosomal protein S5 domain 2-like"/>
    <property type="match status" value="2"/>
</dbReference>
<dbReference type="PROSITE" id="PS00954">
    <property type="entry name" value="IGP_DEHYDRATASE_1"/>
    <property type="match status" value="1"/>
</dbReference>
<dbReference type="PROSITE" id="PS00955">
    <property type="entry name" value="IGP_DEHYDRATASE_2"/>
    <property type="match status" value="1"/>
</dbReference>